<protein>
    <recommendedName>
        <fullName evidence="1">Urease accessory protein UreD 1</fullName>
    </recommendedName>
</protein>
<dbReference type="EMBL" id="CP000758">
    <property type="protein sequence ID" value="ABS13062.1"/>
    <property type="molecule type" value="Genomic_DNA"/>
</dbReference>
<dbReference type="RefSeq" id="WP_010658101.1">
    <property type="nucleotide sequence ID" value="NC_009667.1"/>
</dbReference>
<dbReference type="SMR" id="A6WVQ8"/>
<dbReference type="STRING" id="439375.Oant_0331"/>
<dbReference type="KEGG" id="oan:Oant_0331"/>
<dbReference type="eggNOG" id="COG0829">
    <property type="taxonomic scope" value="Bacteria"/>
</dbReference>
<dbReference type="HOGENOM" id="CLU_056339_2_0_5"/>
<dbReference type="Proteomes" id="UP000002301">
    <property type="component" value="Chromosome 1"/>
</dbReference>
<dbReference type="GO" id="GO:0005737">
    <property type="term" value="C:cytoplasm"/>
    <property type="evidence" value="ECO:0007669"/>
    <property type="project" value="UniProtKB-SubCell"/>
</dbReference>
<dbReference type="GO" id="GO:0016151">
    <property type="term" value="F:nickel cation binding"/>
    <property type="evidence" value="ECO:0007669"/>
    <property type="project" value="UniProtKB-UniRule"/>
</dbReference>
<dbReference type="HAMAP" id="MF_01384">
    <property type="entry name" value="UreD"/>
    <property type="match status" value="1"/>
</dbReference>
<dbReference type="InterPro" id="IPR002669">
    <property type="entry name" value="UreD"/>
</dbReference>
<dbReference type="PANTHER" id="PTHR33643">
    <property type="entry name" value="UREASE ACCESSORY PROTEIN D"/>
    <property type="match status" value="1"/>
</dbReference>
<dbReference type="PANTHER" id="PTHR33643:SF1">
    <property type="entry name" value="UREASE ACCESSORY PROTEIN D"/>
    <property type="match status" value="1"/>
</dbReference>
<dbReference type="Pfam" id="PF01774">
    <property type="entry name" value="UreD"/>
    <property type="match status" value="1"/>
</dbReference>
<name>URED1_BRUA4</name>
<sequence length="283" mass="30596">MIINNNKLAELSSQRVNGLGGLSIHFKDGRSRISRLYQEGAAKIRMPQVGGDPLEAILINTSGGLTGGDRLQWDVELGENASAVITTQACERIYRSGGGEARIATRLKAAKGTRLAWLPQETILFNQSVLSRTLDVELEEGAEILVVEATIFGRLAMGERVDEAMFSDRWRVRLGGRPDGRLVHAEEFRLGPDIGAELQARPVADAACAVATVLLISGEAGKHLEAARQIIGEEGGASLWQVGPATKLMMRLHAPDSYTLRKRLGPLLALLNGKAGLPKVWTF</sequence>
<proteinExistence type="inferred from homology"/>
<keyword id="KW-0143">Chaperone</keyword>
<keyword id="KW-0963">Cytoplasm</keyword>
<keyword id="KW-0996">Nickel insertion</keyword>
<keyword id="KW-1185">Reference proteome</keyword>
<accession>A6WVQ8</accession>
<comment type="function">
    <text evidence="1">Required for maturation of urease via the functional incorporation of the urease nickel metallocenter.</text>
</comment>
<comment type="subunit">
    <text evidence="1">UreD, UreF and UreG form a complex that acts as a GTP-hydrolysis-dependent molecular chaperone, activating the urease apoprotein by helping to assemble the nickel containing metallocenter of UreC. The UreE protein probably delivers the nickel.</text>
</comment>
<comment type="subcellular location">
    <subcellularLocation>
        <location evidence="1">Cytoplasm</location>
    </subcellularLocation>
</comment>
<comment type="similarity">
    <text evidence="1">Belongs to the UreD family.</text>
</comment>
<feature type="chain" id="PRO_0000340468" description="Urease accessory protein UreD 1">
    <location>
        <begin position="1"/>
        <end position="283"/>
    </location>
</feature>
<evidence type="ECO:0000255" key="1">
    <source>
        <dbReference type="HAMAP-Rule" id="MF_01384"/>
    </source>
</evidence>
<organism>
    <name type="scientific">Brucella anthropi (strain ATCC 49188 / DSM 6882 / CCUG 24695 / JCM 21032 / LMG 3331 / NBRC 15819 / NCTC 12168 / Alc 37)</name>
    <name type="common">Ochrobactrum anthropi</name>
    <dbReference type="NCBI Taxonomy" id="439375"/>
    <lineage>
        <taxon>Bacteria</taxon>
        <taxon>Pseudomonadati</taxon>
        <taxon>Pseudomonadota</taxon>
        <taxon>Alphaproteobacteria</taxon>
        <taxon>Hyphomicrobiales</taxon>
        <taxon>Brucellaceae</taxon>
        <taxon>Brucella/Ochrobactrum group</taxon>
        <taxon>Brucella</taxon>
    </lineage>
</organism>
<reference key="1">
    <citation type="journal article" date="2011" name="J. Bacteriol.">
        <title>Genome of Ochrobactrum anthropi ATCC 49188 T, a versatile opportunistic pathogen and symbiont of several eukaryotic hosts.</title>
        <authorList>
            <person name="Chain P.S."/>
            <person name="Lang D.M."/>
            <person name="Comerci D.J."/>
            <person name="Malfatti S.A."/>
            <person name="Vergez L.M."/>
            <person name="Shin M."/>
            <person name="Ugalde R.A."/>
            <person name="Garcia E."/>
            <person name="Tolmasky M.E."/>
        </authorList>
    </citation>
    <scope>NUCLEOTIDE SEQUENCE [LARGE SCALE GENOMIC DNA]</scope>
    <source>
        <strain>ATCC 49188 / DSM 6882 / CCUG 24695 / JCM 21032 / LMG 3331 / NBRC 15819 / NCTC 12168 / Alc 37</strain>
    </source>
</reference>
<gene>
    <name evidence="1" type="primary">ureD1</name>
    <name type="ordered locus">Oant_0331</name>
</gene>